<reference key="1">
    <citation type="journal article" date="2014" name="Genome Announc.">
        <title>Complete Genome Sequence of the Extreme Thermophile Dictyoglomus thermophilum H-6-12.</title>
        <authorList>
            <person name="Coil D.A."/>
            <person name="Badger J.H."/>
            <person name="Forberger H.C."/>
            <person name="Riggs F."/>
            <person name="Madupu R."/>
            <person name="Fedorova N."/>
            <person name="Ward N."/>
            <person name="Robb F.T."/>
            <person name="Eisen J.A."/>
        </authorList>
    </citation>
    <scope>NUCLEOTIDE SEQUENCE [LARGE SCALE GENOMIC DNA]</scope>
    <source>
        <strain>ATCC 35947 / DSM 3960 / H-6-12</strain>
    </source>
</reference>
<comment type="function">
    <text evidence="1">Participates actively in the response to hyperosmotic and heat shock by preventing the aggregation of stress-denatured proteins and by disaggregating proteins, also in an autonomous, DnaK-independent fashion. Unfolded proteins bind initially to DnaJ; upon interaction with the DnaJ-bound protein, DnaK hydrolyzes its bound ATP, resulting in the formation of a stable complex. GrpE releases ADP from DnaK; ATP binding to DnaK triggers the release of the substrate protein, thus completing the reaction cycle. Several rounds of ATP-dependent interactions between DnaJ, DnaK and GrpE are required for fully efficient folding. Also involved, together with DnaK and GrpE, in the DNA replication of plasmids through activation of initiation proteins.</text>
</comment>
<comment type="cofactor">
    <cofactor evidence="1">
        <name>Zn(2+)</name>
        <dbReference type="ChEBI" id="CHEBI:29105"/>
    </cofactor>
    <text evidence="1">Binds 2 Zn(2+) ions per monomer.</text>
</comment>
<comment type="subunit">
    <text evidence="1">Homodimer.</text>
</comment>
<comment type="subcellular location">
    <subcellularLocation>
        <location evidence="1">Cytoplasm</location>
    </subcellularLocation>
</comment>
<comment type="domain">
    <text evidence="1">The J domain is necessary and sufficient to stimulate DnaK ATPase activity. Zinc center 1 plays an important role in the autonomous, DnaK-independent chaperone activity of DnaJ. Zinc center 2 is essential for interaction with DnaK and for DnaJ activity.</text>
</comment>
<comment type="similarity">
    <text evidence="1">Belongs to the DnaJ family.</text>
</comment>
<sequence length="390" mass="44234">MPTKKDYYEILGVPRNATQDEIKQAYRRLVRQYHPDLNKDPSAHEKFKEINEAYEVLSDPQKRAQYDQFGHVGDFSGYGDFQGGWQPGGFDFGDLGRNFEDIFENFFGDSIFGDLFGRRREREKAPRKGADLRYDINITLEEAAFGSEKEIYVTRLETCPTCKGKGTEPGTNPVKCDMCNGTGQIRNMRQTPFGQFVQITTCPKCHGTGQIIINPCHECHGTGKVRRKRRVEFKIPAGVDEGYVIRLAGEGEPGENGGPNGDIYIHIHIIPHKIFKRDNEDIWMELPIDYLIALLGGEVEVPTLEGKEKIYIKPGTQTGEVITLKGKGIPYLRNKNQRGDQKIVVKITVPQNLSPKEKELLLEIAKLRGINIEKDKNIFEQIKKAFKGDN</sequence>
<protein>
    <recommendedName>
        <fullName evidence="1">Chaperone protein DnaJ</fullName>
    </recommendedName>
</protein>
<keyword id="KW-0143">Chaperone</keyword>
<keyword id="KW-0963">Cytoplasm</keyword>
<keyword id="KW-0235">DNA replication</keyword>
<keyword id="KW-0479">Metal-binding</keyword>
<keyword id="KW-0677">Repeat</keyword>
<keyword id="KW-0346">Stress response</keyword>
<keyword id="KW-0862">Zinc</keyword>
<keyword id="KW-0863">Zinc-finger</keyword>
<dbReference type="EMBL" id="CP001146">
    <property type="protein sequence ID" value="ACI19560.1"/>
    <property type="molecule type" value="Genomic_DNA"/>
</dbReference>
<dbReference type="RefSeq" id="WP_012548192.1">
    <property type="nucleotide sequence ID" value="NC_011297.1"/>
</dbReference>
<dbReference type="SMR" id="B5YAR4"/>
<dbReference type="STRING" id="309799.DICTH_1724"/>
<dbReference type="PaxDb" id="309799-DICTH_1724"/>
<dbReference type="KEGG" id="dth:DICTH_1724"/>
<dbReference type="eggNOG" id="COG0484">
    <property type="taxonomic scope" value="Bacteria"/>
</dbReference>
<dbReference type="HOGENOM" id="CLU_017633_0_7_0"/>
<dbReference type="OrthoDB" id="9779889at2"/>
<dbReference type="Proteomes" id="UP000001733">
    <property type="component" value="Chromosome"/>
</dbReference>
<dbReference type="GO" id="GO:0005737">
    <property type="term" value="C:cytoplasm"/>
    <property type="evidence" value="ECO:0007669"/>
    <property type="project" value="UniProtKB-SubCell"/>
</dbReference>
<dbReference type="GO" id="GO:0005524">
    <property type="term" value="F:ATP binding"/>
    <property type="evidence" value="ECO:0007669"/>
    <property type="project" value="InterPro"/>
</dbReference>
<dbReference type="GO" id="GO:0031072">
    <property type="term" value="F:heat shock protein binding"/>
    <property type="evidence" value="ECO:0007669"/>
    <property type="project" value="InterPro"/>
</dbReference>
<dbReference type="GO" id="GO:0051082">
    <property type="term" value="F:unfolded protein binding"/>
    <property type="evidence" value="ECO:0007669"/>
    <property type="project" value="UniProtKB-UniRule"/>
</dbReference>
<dbReference type="GO" id="GO:0008270">
    <property type="term" value="F:zinc ion binding"/>
    <property type="evidence" value="ECO:0007669"/>
    <property type="project" value="UniProtKB-UniRule"/>
</dbReference>
<dbReference type="GO" id="GO:0051085">
    <property type="term" value="P:chaperone cofactor-dependent protein refolding"/>
    <property type="evidence" value="ECO:0007669"/>
    <property type="project" value="TreeGrafter"/>
</dbReference>
<dbReference type="GO" id="GO:0006260">
    <property type="term" value="P:DNA replication"/>
    <property type="evidence" value="ECO:0007669"/>
    <property type="project" value="UniProtKB-KW"/>
</dbReference>
<dbReference type="GO" id="GO:0042026">
    <property type="term" value="P:protein refolding"/>
    <property type="evidence" value="ECO:0007669"/>
    <property type="project" value="TreeGrafter"/>
</dbReference>
<dbReference type="GO" id="GO:0009408">
    <property type="term" value="P:response to heat"/>
    <property type="evidence" value="ECO:0007669"/>
    <property type="project" value="InterPro"/>
</dbReference>
<dbReference type="CDD" id="cd06257">
    <property type="entry name" value="DnaJ"/>
    <property type="match status" value="1"/>
</dbReference>
<dbReference type="CDD" id="cd10747">
    <property type="entry name" value="DnaJ_C"/>
    <property type="match status" value="1"/>
</dbReference>
<dbReference type="CDD" id="cd10719">
    <property type="entry name" value="DnaJ_zf"/>
    <property type="match status" value="1"/>
</dbReference>
<dbReference type="FunFam" id="1.10.287.110:FF:000034">
    <property type="entry name" value="Chaperone protein DnaJ"/>
    <property type="match status" value="1"/>
</dbReference>
<dbReference type="FunFam" id="2.60.260.20:FF:000005">
    <property type="entry name" value="Chaperone protein dnaJ 1, mitochondrial"/>
    <property type="match status" value="1"/>
</dbReference>
<dbReference type="FunFam" id="2.10.230.10:FF:000002">
    <property type="entry name" value="Molecular chaperone DnaJ"/>
    <property type="match status" value="1"/>
</dbReference>
<dbReference type="Gene3D" id="1.10.287.110">
    <property type="entry name" value="DnaJ domain"/>
    <property type="match status" value="1"/>
</dbReference>
<dbReference type="Gene3D" id="2.10.230.10">
    <property type="entry name" value="Heat shock protein DnaJ, cysteine-rich domain"/>
    <property type="match status" value="1"/>
</dbReference>
<dbReference type="Gene3D" id="2.60.260.20">
    <property type="entry name" value="Urease metallochaperone UreE, N-terminal domain"/>
    <property type="match status" value="2"/>
</dbReference>
<dbReference type="HAMAP" id="MF_01152">
    <property type="entry name" value="DnaJ"/>
    <property type="match status" value="1"/>
</dbReference>
<dbReference type="InterPro" id="IPR012724">
    <property type="entry name" value="DnaJ"/>
</dbReference>
<dbReference type="InterPro" id="IPR002939">
    <property type="entry name" value="DnaJ_C"/>
</dbReference>
<dbReference type="InterPro" id="IPR001623">
    <property type="entry name" value="DnaJ_domain"/>
</dbReference>
<dbReference type="InterPro" id="IPR018253">
    <property type="entry name" value="DnaJ_domain_CS"/>
</dbReference>
<dbReference type="InterPro" id="IPR008971">
    <property type="entry name" value="HSP40/DnaJ_pept-bd"/>
</dbReference>
<dbReference type="InterPro" id="IPR001305">
    <property type="entry name" value="HSP_DnaJ_Cys-rich_dom"/>
</dbReference>
<dbReference type="InterPro" id="IPR036410">
    <property type="entry name" value="HSP_DnaJ_Cys-rich_dom_sf"/>
</dbReference>
<dbReference type="InterPro" id="IPR036869">
    <property type="entry name" value="J_dom_sf"/>
</dbReference>
<dbReference type="NCBIfam" id="TIGR02349">
    <property type="entry name" value="DnaJ_bact"/>
    <property type="match status" value="1"/>
</dbReference>
<dbReference type="NCBIfam" id="NF008035">
    <property type="entry name" value="PRK10767.1"/>
    <property type="match status" value="1"/>
</dbReference>
<dbReference type="PANTHER" id="PTHR43096:SF48">
    <property type="entry name" value="CHAPERONE PROTEIN DNAJ"/>
    <property type="match status" value="1"/>
</dbReference>
<dbReference type="PANTHER" id="PTHR43096">
    <property type="entry name" value="DNAJ HOMOLOG 1, MITOCHONDRIAL-RELATED"/>
    <property type="match status" value="1"/>
</dbReference>
<dbReference type="Pfam" id="PF00226">
    <property type="entry name" value="DnaJ"/>
    <property type="match status" value="1"/>
</dbReference>
<dbReference type="Pfam" id="PF01556">
    <property type="entry name" value="DnaJ_C"/>
    <property type="match status" value="1"/>
</dbReference>
<dbReference type="Pfam" id="PF00684">
    <property type="entry name" value="DnaJ_CXXCXGXG"/>
    <property type="match status" value="1"/>
</dbReference>
<dbReference type="PRINTS" id="PR00625">
    <property type="entry name" value="JDOMAIN"/>
</dbReference>
<dbReference type="SMART" id="SM00271">
    <property type="entry name" value="DnaJ"/>
    <property type="match status" value="1"/>
</dbReference>
<dbReference type="SUPFAM" id="SSF46565">
    <property type="entry name" value="Chaperone J-domain"/>
    <property type="match status" value="1"/>
</dbReference>
<dbReference type="SUPFAM" id="SSF57938">
    <property type="entry name" value="DnaJ/Hsp40 cysteine-rich domain"/>
    <property type="match status" value="1"/>
</dbReference>
<dbReference type="SUPFAM" id="SSF49493">
    <property type="entry name" value="HSP40/DnaJ peptide-binding domain"/>
    <property type="match status" value="2"/>
</dbReference>
<dbReference type="PROSITE" id="PS00636">
    <property type="entry name" value="DNAJ_1"/>
    <property type="match status" value="1"/>
</dbReference>
<dbReference type="PROSITE" id="PS50076">
    <property type="entry name" value="DNAJ_2"/>
    <property type="match status" value="1"/>
</dbReference>
<dbReference type="PROSITE" id="PS51188">
    <property type="entry name" value="ZF_CR"/>
    <property type="match status" value="1"/>
</dbReference>
<proteinExistence type="inferred from homology"/>
<accession>B5YAR4</accession>
<organism>
    <name type="scientific">Dictyoglomus thermophilum (strain ATCC 35947 / DSM 3960 / H-6-12)</name>
    <dbReference type="NCBI Taxonomy" id="309799"/>
    <lineage>
        <taxon>Bacteria</taxon>
        <taxon>Pseudomonadati</taxon>
        <taxon>Dictyoglomota</taxon>
        <taxon>Dictyoglomia</taxon>
        <taxon>Dictyoglomales</taxon>
        <taxon>Dictyoglomaceae</taxon>
        <taxon>Dictyoglomus</taxon>
    </lineage>
</organism>
<gene>
    <name evidence="1" type="primary">dnaJ</name>
    <name type="ordered locus">DICTH_1724</name>
</gene>
<name>DNAJ_DICT6</name>
<evidence type="ECO:0000255" key="1">
    <source>
        <dbReference type="HAMAP-Rule" id="MF_01152"/>
    </source>
</evidence>
<feature type="chain" id="PRO_1000137681" description="Chaperone protein DnaJ">
    <location>
        <begin position="1"/>
        <end position="390"/>
    </location>
</feature>
<feature type="domain" description="J" evidence="1">
    <location>
        <begin position="6"/>
        <end position="70"/>
    </location>
</feature>
<feature type="repeat" description="CXXCXGXG motif">
    <location>
        <begin position="159"/>
        <end position="166"/>
    </location>
</feature>
<feature type="repeat" description="CXXCXGXG motif">
    <location>
        <begin position="176"/>
        <end position="183"/>
    </location>
</feature>
<feature type="repeat" description="CXXCXGXG motif">
    <location>
        <begin position="202"/>
        <end position="209"/>
    </location>
</feature>
<feature type="repeat" description="CXXCXGXG motif">
    <location>
        <begin position="216"/>
        <end position="223"/>
    </location>
</feature>
<feature type="zinc finger region" description="CR-type" evidence="1">
    <location>
        <begin position="146"/>
        <end position="228"/>
    </location>
</feature>
<feature type="binding site" evidence="1">
    <location>
        <position position="159"/>
    </location>
    <ligand>
        <name>Zn(2+)</name>
        <dbReference type="ChEBI" id="CHEBI:29105"/>
        <label>1</label>
    </ligand>
</feature>
<feature type="binding site" evidence="1">
    <location>
        <position position="162"/>
    </location>
    <ligand>
        <name>Zn(2+)</name>
        <dbReference type="ChEBI" id="CHEBI:29105"/>
        <label>1</label>
    </ligand>
</feature>
<feature type="binding site" evidence="1">
    <location>
        <position position="176"/>
    </location>
    <ligand>
        <name>Zn(2+)</name>
        <dbReference type="ChEBI" id="CHEBI:29105"/>
        <label>2</label>
    </ligand>
</feature>
<feature type="binding site" evidence="1">
    <location>
        <position position="179"/>
    </location>
    <ligand>
        <name>Zn(2+)</name>
        <dbReference type="ChEBI" id="CHEBI:29105"/>
        <label>2</label>
    </ligand>
</feature>
<feature type="binding site" evidence="1">
    <location>
        <position position="202"/>
    </location>
    <ligand>
        <name>Zn(2+)</name>
        <dbReference type="ChEBI" id="CHEBI:29105"/>
        <label>2</label>
    </ligand>
</feature>
<feature type="binding site" evidence="1">
    <location>
        <position position="205"/>
    </location>
    <ligand>
        <name>Zn(2+)</name>
        <dbReference type="ChEBI" id="CHEBI:29105"/>
        <label>2</label>
    </ligand>
</feature>
<feature type="binding site" evidence="1">
    <location>
        <position position="216"/>
    </location>
    <ligand>
        <name>Zn(2+)</name>
        <dbReference type="ChEBI" id="CHEBI:29105"/>
        <label>1</label>
    </ligand>
</feature>
<feature type="binding site" evidence="1">
    <location>
        <position position="219"/>
    </location>
    <ligand>
        <name>Zn(2+)</name>
        <dbReference type="ChEBI" id="CHEBI:29105"/>
        <label>1</label>
    </ligand>
</feature>